<name>YQAF_BACSU</name>
<keyword id="KW-0238">DNA-binding</keyword>
<keyword id="KW-1185">Reference proteome</keyword>
<keyword id="KW-0804">Transcription</keyword>
<keyword id="KW-0805">Transcription regulation</keyword>
<sequence>MMRKWLKKNRLEKGFTQEEVAKAAQIGRAYYTMIENGTRKPSVIVSKKIGEKLGFDWTIFFEDVCNETKHNSKDSA</sequence>
<dbReference type="EMBL" id="D32216">
    <property type="protein sequence ID" value="BAA06919.1"/>
    <property type="molecule type" value="Genomic_DNA"/>
</dbReference>
<dbReference type="EMBL" id="D84432">
    <property type="protein sequence ID" value="BAA12380.1"/>
    <property type="molecule type" value="Genomic_DNA"/>
</dbReference>
<dbReference type="EMBL" id="AL009126">
    <property type="protein sequence ID" value="CAB14575.1"/>
    <property type="molecule type" value="Genomic_DNA"/>
</dbReference>
<dbReference type="PIR" id="E69944">
    <property type="entry name" value="E69944"/>
</dbReference>
<dbReference type="RefSeq" id="NP_390511.1">
    <property type="nucleotide sequence ID" value="NC_000964.3"/>
</dbReference>
<dbReference type="RefSeq" id="WP_004398958.1">
    <property type="nucleotide sequence ID" value="NZ_OZ025638.1"/>
</dbReference>
<dbReference type="SMR" id="P45903"/>
<dbReference type="FunCoup" id="P45903">
    <property type="interactions" value="71"/>
</dbReference>
<dbReference type="STRING" id="224308.BSU26340"/>
<dbReference type="PaxDb" id="224308-BSU26340"/>
<dbReference type="EnsemblBacteria" id="CAB14575">
    <property type="protein sequence ID" value="CAB14575"/>
    <property type="gene ID" value="BSU_26340"/>
</dbReference>
<dbReference type="GeneID" id="937684"/>
<dbReference type="KEGG" id="bsu:BSU26340"/>
<dbReference type="PATRIC" id="fig|224308.43.peg.2746"/>
<dbReference type="eggNOG" id="COG1476">
    <property type="taxonomic scope" value="Bacteria"/>
</dbReference>
<dbReference type="InParanoid" id="P45903"/>
<dbReference type="OrthoDB" id="1859224at2"/>
<dbReference type="BioCyc" id="BSUB:BSU26340-MONOMER"/>
<dbReference type="Proteomes" id="UP000001570">
    <property type="component" value="Chromosome"/>
</dbReference>
<dbReference type="GO" id="GO:0003677">
    <property type="term" value="F:DNA binding"/>
    <property type="evidence" value="ECO:0007669"/>
    <property type="project" value="UniProtKB-KW"/>
</dbReference>
<dbReference type="CDD" id="cd00093">
    <property type="entry name" value="HTH_XRE"/>
    <property type="match status" value="1"/>
</dbReference>
<dbReference type="Gene3D" id="1.10.260.40">
    <property type="entry name" value="lambda repressor-like DNA-binding domains"/>
    <property type="match status" value="1"/>
</dbReference>
<dbReference type="InterPro" id="IPR001387">
    <property type="entry name" value="Cro/C1-type_HTH"/>
</dbReference>
<dbReference type="InterPro" id="IPR010982">
    <property type="entry name" value="Lambda_DNA-bd_dom_sf"/>
</dbReference>
<dbReference type="Pfam" id="PF01381">
    <property type="entry name" value="HTH_3"/>
    <property type="match status" value="1"/>
</dbReference>
<dbReference type="SMART" id="SM00530">
    <property type="entry name" value="HTH_XRE"/>
    <property type="match status" value="1"/>
</dbReference>
<dbReference type="SUPFAM" id="SSF47413">
    <property type="entry name" value="lambda repressor-like DNA-binding domains"/>
    <property type="match status" value="1"/>
</dbReference>
<dbReference type="PROSITE" id="PS50943">
    <property type="entry name" value="HTH_CROC1"/>
    <property type="match status" value="1"/>
</dbReference>
<organism>
    <name type="scientific">Bacillus subtilis (strain 168)</name>
    <dbReference type="NCBI Taxonomy" id="224308"/>
    <lineage>
        <taxon>Bacteria</taxon>
        <taxon>Bacillati</taxon>
        <taxon>Bacillota</taxon>
        <taxon>Bacilli</taxon>
        <taxon>Bacillales</taxon>
        <taxon>Bacillaceae</taxon>
        <taxon>Bacillus</taxon>
    </lineage>
</organism>
<feature type="chain" id="PRO_0000149751" description="Uncharacterized HTH-type transcriptional regulator YqaF">
    <location>
        <begin position="1"/>
        <end position="76"/>
    </location>
</feature>
<feature type="domain" description="HTH cro/C1-type" evidence="1">
    <location>
        <begin position="6"/>
        <end position="60"/>
    </location>
</feature>
<feature type="DNA-binding region" description="H-T-H motif" evidence="1">
    <location>
        <begin position="17"/>
        <end position="36"/>
    </location>
</feature>
<reference key="1">
    <citation type="journal article" date="1995" name="Microbiology">
        <title>Complete nucleotide sequence of a skin element excised by DNA rearrangement during sporulation in Bacillus subtilis.</title>
        <authorList>
            <person name="Takemaru K."/>
            <person name="Mizuno M."/>
            <person name="Sato T."/>
            <person name="Takeuchi M."/>
            <person name="Kobayashi Y."/>
        </authorList>
    </citation>
    <scope>NUCLEOTIDE SEQUENCE [GENOMIC DNA]</scope>
    <source>
        <strain>168 / JH642</strain>
    </source>
</reference>
<reference key="2">
    <citation type="journal article" date="1996" name="Microbiology">
        <title>Systematic sequencing of the 283 kb 210 degrees-232 degrees region of the Bacillus subtilis genome containing the skin element and many sporulation genes.</title>
        <authorList>
            <person name="Mizuno M."/>
            <person name="Masuda S."/>
            <person name="Takemaru K."/>
            <person name="Hosono S."/>
            <person name="Sato T."/>
            <person name="Takeuchi M."/>
            <person name="Kobayashi Y."/>
        </authorList>
    </citation>
    <scope>NUCLEOTIDE SEQUENCE [GENOMIC DNA]</scope>
    <source>
        <strain>168 / JH642</strain>
    </source>
</reference>
<reference key="3">
    <citation type="journal article" date="1997" name="Nature">
        <title>The complete genome sequence of the Gram-positive bacterium Bacillus subtilis.</title>
        <authorList>
            <person name="Kunst F."/>
            <person name="Ogasawara N."/>
            <person name="Moszer I."/>
            <person name="Albertini A.M."/>
            <person name="Alloni G."/>
            <person name="Azevedo V."/>
            <person name="Bertero M.G."/>
            <person name="Bessieres P."/>
            <person name="Bolotin A."/>
            <person name="Borchert S."/>
            <person name="Borriss R."/>
            <person name="Boursier L."/>
            <person name="Brans A."/>
            <person name="Braun M."/>
            <person name="Brignell S.C."/>
            <person name="Bron S."/>
            <person name="Brouillet S."/>
            <person name="Bruschi C.V."/>
            <person name="Caldwell B."/>
            <person name="Capuano V."/>
            <person name="Carter N.M."/>
            <person name="Choi S.-K."/>
            <person name="Codani J.-J."/>
            <person name="Connerton I.F."/>
            <person name="Cummings N.J."/>
            <person name="Daniel R.A."/>
            <person name="Denizot F."/>
            <person name="Devine K.M."/>
            <person name="Duesterhoeft A."/>
            <person name="Ehrlich S.D."/>
            <person name="Emmerson P.T."/>
            <person name="Entian K.-D."/>
            <person name="Errington J."/>
            <person name="Fabret C."/>
            <person name="Ferrari E."/>
            <person name="Foulger D."/>
            <person name="Fritz C."/>
            <person name="Fujita M."/>
            <person name="Fujita Y."/>
            <person name="Fuma S."/>
            <person name="Galizzi A."/>
            <person name="Galleron N."/>
            <person name="Ghim S.-Y."/>
            <person name="Glaser P."/>
            <person name="Goffeau A."/>
            <person name="Golightly E.J."/>
            <person name="Grandi G."/>
            <person name="Guiseppi G."/>
            <person name="Guy B.J."/>
            <person name="Haga K."/>
            <person name="Haiech J."/>
            <person name="Harwood C.R."/>
            <person name="Henaut A."/>
            <person name="Hilbert H."/>
            <person name="Holsappel S."/>
            <person name="Hosono S."/>
            <person name="Hullo M.-F."/>
            <person name="Itaya M."/>
            <person name="Jones L.-M."/>
            <person name="Joris B."/>
            <person name="Karamata D."/>
            <person name="Kasahara Y."/>
            <person name="Klaerr-Blanchard M."/>
            <person name="Klein C."/>
            <person name="Kobayashi Y."/>
            <person name="Koetter P."/>
            <person name="Koningstein G."/>
            <person name="Krogh S."/>
            <person name="Kumano M."/>
            <person name="Kurita K."/>
            <person name="Lapidus A."/>
            <person name="Lardinois S."/>
            <person name="Lauber J."/>
            <person name="Lazarevic V."/>
            <person name="Lee S.-M."/>
            <person name="Levine A."/>
            <person name="Liu H."/>
            <person name="Masuda S."/>
            <person name="Mauel C."/>
            <person name="Medigue C."/>
            <person name="Medina N."/>
            <person name="Mellado R.P."/>
            <person name="Mizuno M."/>
            <person name="Moestl D."/>
            <person name="Nakai S."/>
            <person name="Noback M."/>
            <person name="Noone D."/>
            <person name="O'Reilly M."/>
            <person name="Ogawa K."/>
            <person name="Ogiwara A."/>
            <person name="Oudega B."/>
            <person name="Park S.-H."/>
            <person name="Parro V."/>
            <person name="Pohl T.M."/>
            <person name="Portetelle D."/>
            <person name="Porwollik S."/>
            <person name="Prescott A.M."/>
            <person name="Presecan E."/>
            <person name="Pujic P."/>
            <person name="Purnelle B."/>
            <person name="Rapoport G."/>
            <person name="Rey M."/>
            <person name="Reynolds S."/>
            <person name="Rieger M."/>
            <person name="Rivolta C."/>
            <person name="Rocha E."/>
            <person name="Roche B."/>
            <person name="Rose M."/>
            <person name="Sadaie Y."/>
            <person name="Sato T."/>
            <person name="Scanlan E."/>
            <person name="Schleich S."/>
            <person name="Schroeter R."/>
            <person name="Scoffone F."/>
            <person name="Sekiguchi J."/>
            <person name="Sekowska A."/>
            <person name="Seror S.J."/>
            <person name="Serror P."/>
            <person name="Shin B.-S."/>
            <person name="Soldo B."/>
            <person name="Sorokin A."/>
            <person name="Tacconi E."/>
            <person name="Takagi T."/>
            <person name="Takahashi H."/>
            <person name="Takemaru K."/>
            <person name="Takeuchi M."/>
            <person name="Tamakoshi A."/>
            <person name="Tanaka T."/>
            <person name="Terpstra P."/>
            <person name="Tognoni A."/>
            <person name="Tosato V."/>
            <person name="Uchiyama S."/>
            <person name="Vandenbol M."/>
            <person name="Vannier F."/>
            <person name="Vassarotti A."/>
            <person name="Viari A."/>
            <person name="Wambutt R."/>
            <person name="Wedler E."/>
            <person name="Wedler H."/>
            <person name="Weitzenegger T."/>
            <person name="Winters P."/>
            <person name="Wipat A."/>
            <person name="Yamamoto H."/>
            <person name="Yamane K."/>
            <person name="Yasumoto K."/>
            <person name="Yata K."/>
            <person name="Yoshida K."/>
            <person name="Yoshikawa H.-F."/>
            <person name="Zumstein E."/>
            <person name="Yoshikawa H."/>
            <person name="Danchin A."/>
        </authorList>
    </citation>
    <scope>NUCLEOTIDE SEQUENCE [LARGE SCALE GENOMIC DNA]</scope>
    <source>
        <strain>168</strain>
    </source>
</reference>
<reference key="4">
    <citation type="journal article" date="1995" name="Gene">
        <title>Analysis of a Bacillus subtilis genome fragment using a co-operative computer system prototype.</title>
        <authorList>
            <person name="Medigue C."/>
            <person name="Moszer I."/>
            <person name="Viari A."/>
            <person name="Danchin A."/>
        </authorList>
    </citation>
    <scope>IDENTIFICATION</scope>
</reference>
<accession>P45903</accession>
<gene>
    <name type="primary">yqaF</name>
    <name type="ordered locus">BSU26340</name>
</gene>
<protein>
    <recommendedName>
        <fullName>Uncharacterized HTH-type transcriptional regulator YqaF</fullName>
    </recommendedName>
</protein>
<evidence type="ECO:0000255" key="1">
    <source>
        <dbReference type="PROSITE-ProRule" id="PRU00257"/>
    </source>
</evidence>
<proteinExistence type="predicted"/>